<proteinExistence type="evidence at protein level"/>
<dbReference type="EC" id="1.14.-.-"/>
<dbReference type="EMBL" id="AY987039">
    <property type="protein sequence ID" value="AAY42600.1"/>
    <property type="molecule type" value="mRNA"/>
</dbReference>
<dbReference type="EMBL" id="AY987040">
    <property type="protein sequence ID" value="AAY42601.1"/>
    <property type="molecule type" value="Genomic_DNA"/>
</dbReference>
<dbReference type="EMBL" id="AC137619">
    <property type="protein sequence ID" value="AAW56875.1"/>
    <property type="molecule type" value="Genomic_DNA"/>
</dbReference>
<dbReference type="EMBL" id="AP008211">
    <property type="protein sequence ID" value="BAF17780.1"/>
    <property type="molecule type" value="Genomic_DNA"/>
</dbReference>
<dbReference type="EMBL" id="AP014961">
    <property type="protein sequence ID" value="BAS94595.1"/>
    <property type="molecule type" value="Genomic_DNA"/>
</dbReference>
<dbReference type="EMBL" id="CM000142">
    <property type="protein sequence ID" value="EEE64129.1"/>
    <property type="status" value="ALT_SEQ"/>
    <property type="molecule type" value="Genomic_DNA"/>
</dbReference>
<dbReference type="EMBL" id="AK109526">
    <property type="protein sequence ID" value="BAG98789.1"/>
    <property type="molecule type" value="mRNA"/>
</dbReference>
<dbReference type="RefSeq" id="XP_015637923.1">
    <property type="nucleotide sequence ID" value="XM_015782437.1"/>
</dbReference>
<dbReference type="SMR" id="Q5KQH7"/>
<dbReference type="FunCoup" id="Q5KQH7">
    <property type="interactions" value="204"/>
</dbReference>
<dbReference type="STRING" id="39947.Q5KQH7"/>
<dbReference type="PaxDb" id="39947-Q5KQH7"/>
<dbReference type="EnsemblPlants" id="Os05t0482400-01">
    <property type="protein sequence ID" value="Os05t0482400-01"/>
    <property type="gene ID" value="Os05g0482400"/>
</dbReference>
<dbReference type="Gramene" id="Os05t0482400-01">
    <property type="protein sequence ID" value="Os05t0482400-01"/>
    <property type="gene ID" value="Os05g0482400"/>
</dbReference>
<dbReference type="KEGG" id="dosa:Os05g0482400"/>
<dbReference type="eggNOG" id="KOG0157">
    <property type="taxonomic scope" value="Eukaryota"/>
</dbReference>
<dbReference type="HOGENOM" id="CLU_001570_5_0_1"/>
<dbReference type="InParanoid" id="Q5KQH7"/>
<dbReference type="OMA" id="HPQASFM"/>
<dbReference type="OrthoDB" id="1470350at2759"/>
<dbReference type="BioCyc" id="MetaCyc:LOC_OS05G0482400-MONOMER"/>
<dbReference type="BRENDA" id="1.14.14.1">
    <property type="organism ID" value="4460"/>
</dbReference>
<dbReference type="Proteomes" id="UP000000763">
    <property type="component" value="Chromosome 5"/>
</dbReference>
<dbReference type="Proteomes" id="UP000007752">
    <property type="component" value="Chromosome 5"/>
</dbReference>
<dbReference type="Proteomes" id="UP000059680">
    <property type="component" value="Chromosome 5"/>
</dbReference>
<dbReference type="GO" id="GO:0005789">
    <property type="term" value="C:endoplasmic reticulum membrane"/>
    <property type="evidence" value="ECO:0007669"/>
    <property type="project" value="UniProtKB-SubCell"/>
</dbReference>
<dbReference type="GO" id="GO:0020037">
    <property type="term" value="F:heme binding"/>
    <property type="evidence" value="ECO:0007669"/>
    <property type="project" value="InterPro"/>
</dbReference>
<dbReference type="GO" id="GO:0005506">
    <property type="term" value="F:iron ion binding"/>
    <property type="evidence" value="ECO:0007669"/>
    <property type="project" value="InterPro"/>
</dbReference>
<dbReference type="GO" id="GO:0004497">
    <property type="term" value="F:monooxygenase activity"/>
    <property type="evidence" value="ECO:0000318"/>
    <property type="project" value="GO_Central"/>
</dbReference>
<dbReference type="GO" id="GO:0016705">
    <property type="term" value="F:oxidoreductase activity, acting on paired donors, with incorporation or reduction of molecular oxygen"/>
    <property type="evidence" value="ECO:0007669"/>
    <property type="project" value="InterPro"/>
</dbReference>
<dbReference type="GO" id="GO:0045487">
    <property type="term" value="P:gibberellin catabolic process"/>
    <property type="evidence" value="ECO:0000314"/>
    <property type="project" value="Gramene"/>
</dbReference>
<dbReference type="CDD" id="cd20640">
    <property type="entry name" value="CYP714"/>
    <property type="match status" value="1"/>
</dbReference>
<dbReference type="FunFam" id="1.10.630.10:FF:000143">
    <property type="entry name" value="Cytochrome P450 714D1"/>
    <property type="match status" value="1"/>
</dbReference>
<dbReference type="Gene3D" id="1.10.630.10">
    <property type="entry name" value="Cytochrome P450"/>
    <property type="match status" value="1"/>
</dbReference>
<dbReference type="InterPro" id="IPR001128">
    <property type="entry name" value="Cyt_P450"/>
</dbReference>
<dbReference type="InterPro" id="IPR017972">
    <property type="entry name" value="Cyt_P450_CS"/>
</dbReference>
<dbReference type="InterPro" id="IPR002401">
    <property type="entry name" value="Cyt_P450_E_grp-I"/>
</dbReference>
<dbReference type="InterPro" id="IPR036396">
    <property type="entry name" value="Cyt_P450_sf"/>
</dbReference>
<dbReference type="InterPro" id="IPR050665">
    <property type="entry name" value="Cytochrome_P450_Monooxygen"/>
</dbReference>
<dbReference type="PANTHER" id="PTHR24282:SF39">
    <property type="entry name" value="CYTOCHROME P450 714D1"/>
    <property type="match status" value="1"/>
</dbReference>
<dbReference type="PANTHER" id="PTHR24282">
    <property type="entry name" value="CYTOCHROME P450 FAMILY MEMBER"/>
    <property type="match status" value="1"/>
</dbReference>
<dbReference type="Pfam" id="PF00067">
    <property type="entry name" value="p450"/>
    <property type="match status" value="1"/>
</dbReference>
<dbReference type="PRINTS" id="PR00463">
    <property type="entry name" value="EP450I"/>
</dbReference>
<dbReference type="PRINTS" id="PR00385">
    <property type="entry name" value="P450"/>
</dbReference>
<dbReference type="SUPFAM" id="SSF48264">
    <property type="entry name" value="Cytochrome P450"/>
    <property type="match status" value="1"/>
</dbReference>
<dbReference type="PROSITE" id="PS00086">
    <property type="entry name" value="CYTOCHROME_P450"/>
    <property type="match status" value="1"/>
</dbReference>
<sequence>MESFFVFFTAAALPVVVAAAVIAGLCITAAWLARPRRVAEVFRRQGIDGPPPSSFLAGNLPEMKARVAAAASAAAPTADGEETASAGGGGGGRDFEKDGFDDYCTRIFPYFHKWRKAYGETYLYWLRRRPALYVTDPELIGEIGRCVSLDMGKPKYLQKGQEPLFGGGVLKANGACWARQRKVIAPEFYMARVRAMVQLMVDAAQPLIASWESRIDAAGGAAAAEVVVDGDLRSFSFDVISRACFGSDYSRGREIFLRLRELSGLMSETSVIFSIPSLRHLPTGKNRRIWRLTGEIRSLIMELVRERRCAARAAREHGGKAAPPSPPERDFLGSIIENSGGQPRPDDFVVDNCKNIYFAGHETSAVTATWCLMLLAAHPEWQDRARAEVLEVCGGDGAAAPAAPDFDMVSRMRTVGMVVQETLRLFPPSSFVVRETFRDMQLGRLLAPKGTYLFVPVSTMHHDVAAWGPTARLFDPSRFRDGVAAACKHPQASFMPFGLGARTCLGQNLALVEVKTLVAVVLARFEFTLSPEYRHSPAFRLIIEPEFGLRLRIRRAGGQDATSQVDTSTAPVHSSHN</sequence>
<reference key="1">
    <citation type="journal article" date="2006" name="Plant Cell">
        <title>ELONGATED UPPERMOST INTERNODE encodes a cytochrome P450 monooxygenase that epoxidizes gibberellins in a novel deactivation reaction in rice.</title>
        <authorList>
            <person name="Zhu Y."/>
            <person name="Nomura T."/>
            <person name="Xu Y."/>
            <person name="Zhang Y."/>
            <person name="Peng Y."/>
            <person name="Mao B."/>
            <person name="Hanada A."/>
            <person name="Zhou H."/>
            <person name="Wang R."/>
            <person name="Li P."/>
            <person name="Zhu X."/>
            <person name="Mander L.N."/>
            <person name="Kamiya Y."/>
            <person name="Yamaguchi S."/>
            <person name="He Z."/>
        </authorList>
    </citation>
    <scope>NUCLEOTIDE SEQUENCE [GENOMIC DNA / MRNA]</scope>
    <scope>FUNCTION</scope>
    <scope>CATALYTIC ACTIVITY</scope>
    <scope>SUBCELLULAR LOCATION</scope>
    <scope>TISSUE SPECIFICITY</scope>
</reference>
<reference key="2">
    <citation type="journal article" date="2005" name="Mol. Genet. Genomics">
        <title>A fine physical map of the rice chromosome 5.</title>
        <authorList>
            <person name="Cheng C.-H."/>
            <person name="Chung M.C."/>
            <person name="Liu S.-M."/>
            <person name="Chen S.-K."/>
            <person name="Kao F.Y."/>
            <person name="Lin S.-J."/>
            <person name="Hsiao S.-H."/>
            <person name="Tseng I.C."/>
            <person name="Hsing Y.-I.C."/>
            <person name="Wu H.-P."/>
            <person name="Chen C.-S."/>
            <person name="Shaw J.-F."/>
            <person name="Wu J."/>
            <person name="Matsumoto T."/>
            <person name="Sasaki T."/>
            <person name="Chen H.-C."/>
            <person name="Chow T.-Y."/>
        </authorList>
    </citation>
    <scope>NUCLEOTIDE SEQUENCE [LARGE SCALE GENOMIC DNA]</scope>
    <source>
        <strain>cv. Nipponbare</strain>
    </source>
</reference>
<reference key="3">
    <citation type="journal article" date="2005" name="Nature">
        <title>The map-based sequence of the rice genome.</title>
        <authorList>
            <consortium name="International rice genome sequencing project (IRGSP)"/>
        </authorList>
    </citation>
    <scope>NUCLEOTIDE SEQUENCE [LARGE SCALE GENOMIC DNA]</scope>
    <source>
        <strain>cv. Nipponbare</strain>
    </source>
</reference>
<reference key="4">
    <citation type="journal article" date="2008" name="Nucleic Acids Res.">
        <title>The rice annotation project database (RAP-DB): 2008 update.</title>
        <authorList>
            <consortium name="The rice annotation project (RAP)"/>
        </authorList>
    </citation>
    <scope>GENOME REANNOTATION</scope>
    <source>
        <strain>cv. Nipponbare</strain>
    </source>
</reference>
<reference key="5">
    <citation type="journal article" date="2013" name="Rice">
        <title>Improvement of the Oryza sativa Nipponbare reference genome using next generation sequence and optical map data.</title>
        <authorList>
            <person name="Kawahara Y."/>
            <person name="de la Bastide M."/>
            <person name="Hamilton J.P."/>
            <person name="Kanamori H."/>
            <person name="McCombie W.R."/>
            <person name="Ouyang S."/>
            <person name="Schwartz D.C."/>
            <person name="Tanaka T."/>
            <person name="Wu J."/>
            <person name="Zhou S."/>
            <person name="Childs K.L."/>
            <person name="Davidson R.M."/>
            <person name="Lin H."/>
            <person name="Quesada-Ocampo L."/>
            <person name="Vaillancourt B."/>
            <person name="Sakai H."/>
            <person name="Lee S.S."/>
            <person name="Kim J."/>
            <person name="Numa H."/>
            <person name="Itoh T."/>
            <person name="Buell C.R."/>
            <person name="Matsumoto T."/>
        </authorList>
    </citation>
    <scope>GENOME REANNOTATION</scope>
    <source>
        <strain>cv. Nipponbare</strain>
    </source>
</reference>
<reference key="6">
    <citation type="journal article" date="2005" name="PLoS Biol.">
        <title>The genomes of Oryza sativa: a history of duplications.</title>
        <authorList>
            <person name="Yu J."/>
            <person name="Wang J."/>
            <person name="Lin W."/>
            <person name="Li S."/>
            <person name="Li H."/>
            <person name="Zhou J."/>
            <person name="Ni P."/>
            <person name="Dong W."/>
            <person name="Hu S."/>
            <person name="Zeng C."/>
            <person name="Zhang J."/>
            <person name="Zhang Y."/>
            <person name="Li R."/>
            <person name="Xu Z."/>
            <person name="Li S."/>
            <person name="Li X."/>
            <person name="Zheng H."/>
            <person name="Cong L."/>
            <person name="Lin L."/>
            <person name="Yin J."/>
            <person name="Geng J."/>
            <person name="Li G."/>
            <person name="Shi J."/>
            <person name="Liu J."/>
            <person name="Lv H."/>
            <person name="Li J."/>
            <person name="Wang J."/>
            <person name="Deng Y."/>
            <person name="Ran L."/>
            <person name="Shi X."/>
            <person name="Wang X."/>
            <person name="Wu Q."/>
            <person name="Li C."/>
            <person name="Ren X."/>
            <person name="Wang J."/>
            <person name="Wang X."/>
            <person name="Li D."/>
            <person name="Liu D."/>
            <person name="Zhang X."/>
            <person name="Ji Z."/>
            <person name="Zhao W."/>
            <person name="Sun Y."/>
            <person name="Zhang Z."/>
            <person name="Bao J."/>
            <person name="Han Y."/>
            <person name="Dong L."/>
            <person name="Ji J."/>
            <person name="Chen P."/>
            <person name="Wu S."/>
            <person name="Liu J."/>
            <person name="Xiao Y."/>
            <person name="Bu D."/>
            <person name="Tan J."/>
            <person name="Yang L."/>
            <person name="Ye C."/>
            <person name="Zhang J."/>
            <person name="Xu J."/>
            <person name="Zhou Y."/>
            <person name="Yu Y."/>
            <person name="Zhang B."/>
            <person name="Zhuang S."/>
            <person name="Wei H."/>
            <person name="Liu B."/>
            <person name="Lei M."/>
            <person name="Yu H."/>
            <person name="Li Y."/>
            <person name="Xu H."/>
            <person name="Wei S."/>
            <person name="He X."/>
            <person name="Fang L."/>
            <person name="Zhang Z."/>
            <person name="Zhang Y."/>
            <person name="Huang X."/>
            <person name="Su Z."/>
            <person name="Tong W."/>
            <person name="Li J."/>
            <person name="Tong Z."/>
            <person name="Li S."/>
            <person name="Ye J."/>
            <person name="Wang L."/>
            <person name="Fang L."/>
            <person name="Lei T."/>
            <person name="Chen C.-S."/>
            <person name="Chen H.-C."/>
            <person name="Xu Z."/>
            <person name="Li H."/>
            <person name="Huang H."/>
            <person name="Zhang F."/>
            <person name="Xu H."/>
            <person name="Li N."/>
            <person name="Zhao C."/>
            <person name="Li S."/>
            <person name="Dong L."/>
            <person name="Huang Y."/>
            <person name="Li L."/>
            <person name="Xi Y."/>
            <person name="Qi Q."/>
            <person name="Li W."/>
            <person name="Zhang B."/>
            <person name="Hu W."/>
            <person name="Zhang Y."/>
            <person name="Tian X."/>
            <person name="Jiao Y."/>
            <person name="Liang X."/>
            <person name="Jin J."/>
            <person name="Gao L."/>
            <person name="Zheng W."/>
            <person name="Hao B."/>
            <person name="Liu S.-M."/>
            <person name="Wang W."/>
            <person name="Yuan L."/>
            <person name="Cao M."/>
            <person name="McDermott J."/>
            <person name="Samudrala R."/>
            <person name="Wang J."/>
            <person name="Wong G.K.-S."/>
            <person name="Yang H."/>
        </authorList>
    </citation>
    <scope>NUCLEOTIDE SEQUENCE [LARGE SCALE GENOMIC DNA]</scope>
    <source>
        <strain>cv. Nipponbare</strain>
    </source>
</reference>
<reference key="7">
    <citation type="journal article" date="2003" name="Science">
        <title>Collection, mapping, and annotation of over 28,000 cDNA clones from japonica rice.</title>
        <authorList>
            <consortium name="The rice full-length cDNA consortium"/>
        </authorList>
    </citation>
    <scope>NUCLEOTIDE SEQUENCE [LARGE SCALE MRNA]</scope>
    <source>
        <strain>cv. Nipponbare</strain>
    </source>
</reference>
<reference key="8">
    <citation type="journal article" date="2013" name="Proc. Natl. Acad. Sci. U.S.A.">
        <title>CYP714B1 and CYP714B2 encode gibberellin 13-oxidases that reduce gibberellin activity in rice.</title>
        <authorList>
            <person name="Magome H."/>
            <person name="Nomura T."/>
            <person name="Hanada A."/>
            <person name="Takeda-Kamiya N."/>
            <person name="Ohnishi T."/>
            <person name="Shinma Y."/>
            <person name="Katsumata T."/>
            <person name="Kawaide H."/>
            <person name="Kamiya Y."/>
            <person name="Yamaguchi S."/>
        </authorList>
    </citation>
    <scope>FUNCTION</scope>
    <scope>TISSUE SPECIFICITY</scope>
</reference>
<comment type="function">
    <text evidence="4 5">Catalyzes the 16alpha,17-epoxidation on non-13-hydroxylated gibberellins (GAs), including GA4, GA9, and GA12. No activity with GA1, GA20, GA53 or ent-kaurenoic acid. Reduces the biological activity of GAs.</text>
</comment>
<comment type="cofactor">
    <cofactor evidence="1">
        <name>heme</name>
        <dbReference type="ChEBI" id="CHEBI:30413"/>
    </cofactor>
</comment>
<comment type="subcellular location">
    <subcellularLocation>
        <location evidence="4">Endoplasmic reticulum membrane</location>
        <topology evidence="4">Single-pass type III membrane protein</topology>
    </subcellularLocation>
</comment>
<comment type="tissue specificity">
    <text evidence="4 5">Expressed in rapidly elongating or dividing tissues, including the shoot apical meristem, the intercalary meristem and elongating zones of internodes, and panicle but not in young seedlings, roots and leaves. During the heading stage, the highest expression is detected in the flowering spikelets, anthers, the divisional zone and the node of the uppermost internode.</text>
</comment>
<comment type="miscellaneous">
    <text evidence="7">Overexpression of CYP714D1 causes severe dwarfism and sterility.</text>
</comment>
<comment type="similarity">
    <text evidence="6">Belongs to the cytochrome P450 family.</text>
</comment>
<comment type="sequence caution" evidence="6">
    <conflict type="erroneous gene model prediction">
        <sequence resource="EMBL-CDS" id="EEE64129"/>
    </conflict>
</comment>
<name>C14D1_ORYSJ</name>
<accession>Q5KQH7</accession>
<accession>A0A0P0WNQ4</accession>
<accession>B9FJW9</accession>
<evidence type="ECO:0000250" key="1"/>
<evidence type="ECO:0000255" key="2"/>
<evidence type="ECO:0000256" key="3">
    <source>
        <dbReference type="SAM" id="MobiDB-lite"/>
    </source>
</evidence>
<evidence type="ECO:0000269" key="4">
    <source>
    </source>
</evidence>
<evidence type="ECO:0000269" key="5">
    <source>
    </source>
</evidence>
<evidence type="ECO:0000305" key="6"/>
<evidence type="ECO:0000305" key="7">
    <source>
    </source>
</evidence>
<organism>
    <name type="scientific">Oryza sativa subsp. japonica</name>
    <name type="common">Rice</name>
    <dbReference type="NCBI Taxonomy" id="39947"/>
    <lineage>
        <taxon>Eukaryota</taxon>
        <taxon>Viridiplantae</taxon>
        <taxon>Streptophyta</taxon>
        <taxon>Embryophyta</taxon>
        <taxon>Tracheophyta</taxon>
        <taxon>Spermatophyta</taxon>
        <taxon>Magnoliopsida</taxon>
        <taxon>Liliopsida</taxon>
        <taxon>Poales</taxon>
        <taxon>Poaceae</taxon>
        <taxon>BOP clade</taxon>
        <taxon>Oryzoideae</taxon>
        <taxon>Oryzeae</taxon>
        <taxon>Oryzinae</taxon>
        <taxon>Oryza</taxon>
        <taxon>Oryza sativa</taxon>
    </lineage>
</organism>
<gene>
    <name type="primary">CYP714D1</name>
    <name type="synonym">EUI1</name>
    <name type="ordered locus">Os05g0482400</name>
    <name type="ordered locus">LOC_Os05g40384</name>
    <name type="ORF">OsJ_18961</name>
    <name type="ORF">OSJNBa0095J22.13</name>
</gene>
<feature type="chain" id="PRO_0000422418" description="Cytochrome P450 714D1">
    <location>
        <begin position="1"/>
        <end position="577"/>
    </location>
</feature>
<feature type="topological domain" description="Lumenal" evidence="2">
    <location>
        <begin position="1"/>
        <end position="3"/>
    </location>
</feature>
<feature type="transmembrane region" description="Helical; Signal-anchor for type III membrane protein" evidence="2">
    <location>
        <begin position="4"/>
        <end position="24"/>
    </location>
</feature>
<feature type="topological domain" description="Cytoplasmic" evidence="2">
    <location>
        <begin position="25"/>
        <end position="577"/>
    </location>
</feature>
<feature type="region of interest" description="Disordered" evidence="3">
    <location>
        <begin position="315"/>
        <end position="343"/>
    </location>
</feature>
<feature type="binding site" description="axial binding residue" evidence="1">
    <location>
        <position position="504"/>
    </location>
    <ligand>
        <name>heme</name>
        <dbReference type="ChEBI" id="CHEBI:30413"/>
    </ligand>
    <ligandPart>
        <name>Fe</name>
        <dbReference type="ChEBI" id="CHEBI:18248"/>
    </ligandPart>
</feature>
<feature type="sequence conflict" description="In Ref. 6; EEE64129." evidence="6" ref="6">
    <original>AA</original>
    <variation>PR</variation>
    <location>
        <begin position="321"/>
        <end position="322"/>
    </location>
</feature>
<protein>
    <recommendedName>
        <fullName>Cytochrome P450 714D1</fullName>
        <ecNumber>1.14.-.-</ecNumber>
    </recommendedName>
    <alternativeName>
        <fullName>Protein ELONGATED UPPERMOST INTERNODE 1</fullName>
        <shortName>EUI1</shortName>
    </alternativeName>
</protein>
<keyword id="KW-0256">Endoplasmic reticulum</keyword>
<keyword id="KW-0349">Heme</keyword>
<keyword id="KW-0408">Iron</keyword>
<keyword id="KW-0472">Membrane</keyword>
<keyword id="KW-0479">Metal-binding</keyword>
<keyword id="KW-0503">Monooxygenase</keyword>
<keyword id="KW-0560">Oxidoreductase</keyword>
<keyword id="KW-1185">Reference proteome</keyword>
<keyword id="KW-0735">Signal-anchor</keyword>
<keyword id="KW-0812">Transmembrane</keyword>
<keyword id="KW-1133">Transmembrane helix</keyword>